<keyword id="KW-0378">Hydrolase</keyword>
<keyword id="KW-1185">Reference proteome</keyword>
<dbReference type="EC" id="3.2.2.-" evidence="1"/>
<dbReference type="EC" id="3.2.2.10" evidence="1"/>
<dbReference type="EC" id="3.2.2.4" evidence="1"/>
<dbReference type="EMBL" id="AE005174">
    <property type="protein sequence ID" value="AAG57909.1"/>
    <property type="molecule type" value="Genomic_DNA"/>
</dbReference>
<dbReference type="EMBL" id="BA000007">
    <property type="protein sequence ID" value="BAB37078.1"/>
    <property type="molecule type" value="Genomic_DNA"/>
</dbReference>
<dbReference type="PIR" id="A85931">
    <property type="entry name" value="A85931"/>
</dbReference>
<dbReference type="PIR" id="G91085">
    <property type="entry name" value="G91085"/>
</dbReference>
<dbReference type="RefSeq" id="NP_311682.1">
    <property type="nucleotide sequence ID" value="NC_002695.1"/>
</dbReference>
<dbReference type="RefSeq" id="WP_000627995.1">
    <property type="nucleotide sequence ID" value="NZ_VOAI01000003.1"/>
</dbReference>
<dbReference type="SMR" id="P0ADS0"/>
<dbReference type="STRING" id="155864.Z4112"/>
<dbReference type="GeneID" id="75203814"/>
<dbReference type="GeneID" id="916540"/>
<dbReference type="KEGG" id="ece:Z4112"/>
<dbReference type="KEGG" id="ecs:ECs_3655"/>
<dbReference type="PATRIC" id="fig|386585.9.peg.3821"/>
<dbReference type="eggNOG" id="COG1611">
    <property type="taxonomic scope" value="Bacteria"/>
</dbReference>
<dbReference type="HOGENOM" id="CLU_047550_0_0_6"/>
<dbReference type="OMA" id="EYKYTKK"/>
<dbReference type="Proteomes" id="UP000000558">
    <property type="component" value="Chromosome"/>
</dbReference>
<dbReference type="Proteomes" id="UP000002519">
    <property type="component" value="Chromosome"/>
</dbReference>
<dbReference type="GO" id="GO:0005829">
    <property type="term" value="C:cytosol"/>
    <property type="evidence" value="ECO:0007669"/>
    <property type="project" value="TreeGrafter"/>
</dbReference>
<dbReference type="GO" id="GO:0008714">
    <property type="term" value="F:AMP nucleosidase activity"/>
    <property type="evidence" value="ECO:0007669"/>
    <property type="project" value="UniProtKB-EC"/>
</dbReference>
<dbReference type="GO" id="GO:0047723">
    <property type="term" value="F:inosinate nucleosidase activity"/>
    <property type="evidence" value="ECO:0007669"/>
    <property type="project" value="RHEA"/>
</dbReference>
<dbReference type="GO" id="GO:0047405">
    <property type="term" value="F:pyrimidine-5'-nucleotide nucleosidase activity"/>
    <property type="evidence" value="ECO:0007669"/>
    <property type="project" value="UniProtKB-EC"/>
</dbReference>
<dbReference type="FunFam" id="3.30.1850.10:FF:000001">
    <property type="entry name" value="LOG family protein YgdH"/>
    <property type="match status" value="1"/>
</dbReference>
<dbReference type="FunFam" id="3.40.50.450:FF:000007">
    <property type="entry name" value="LOG family protein ygdH"/>
    <property type="match status" value="1"/>
</dbReference>
<dbReference type="Gene3D" id="3.40.50.450">
    <property type="match status" value="1"/>
</dbReference>
<dbReference type="Gene3D" id="3.30.1850.10">
    <property type="entry name" value="MoCo carrier protein-like"/>
    <property type="match status" value="1"/>
</dbReference>
<dbReference type="InterPro" id="IPR031100">
    <property type="entry name" value="LOG_fam"/>
</dbReference>
<dbReference type="InterPro" id="IPR052341">
    <property type="entry name" value="LOG_family_nucleotidases"/>
</dbReference>
<dbReference type="InterPro" id="IPR049788">
    <property type="entry name" value="PpnN"/>
</dbReference>
<dbReference type="InterPro" id="IPR037153">
    <property type="entry name" value="PpnN-like_sf"/>
</dbReference>
<dbReference type="InterPro" id="IPR021826">
    <property type="entry name" value="PpnN_C"/>
</dbReference>
<dbReference type="InterPro" id="IPR027820">
    <property type="entry name" value="PpnN_N"/>
</dbReference>
<dbReference type="NCBIfam" id="NF038390">
    <property type="entry name" value="Nsidase_PpnN"/>
    <property type="match status" value="1"/>
</dbReference>
<dbReference type="PANTHER" id="PTHR43393">
    <property type="entry name" value="CYTOKININ RIBOSIDE 5'-MONOPHOSPHATE PHOSPHORIBOHYDROLASE"/>
    <property type="match status" value="1"/>
</dbReference>
<dbReference type="PANTHER" id="PTHR43393:SF1">
    <property type="entry name" value="PYRIMIDINE_PURINE NUCLEOTIDE 5'-MONOPHOSPHATE NUCLEOSIDASE"/>
    <property type="match status" value="1"/>
</dbReference>
<dbReference type="Pfam" id="PF14793">
    <property type="entry name" value="DUF4478"/>
    <property type="match status" value="1"/>
</dbReference>
<dbReference type="Pfam" id="PF03641">
    <property type="entry name" value="Lysine_decarbox"/>
    <property type="match status" value="1"/>
</dbReference>
<dbReference type="Pfam" id="PF11892">
    <property type="entry name" value="PpnN_C"/>
    <property type="match status" value="1"/>
</dbReference>
<dbReference type="SUPFAM" id="SSF102405">
    <property type="entry name" value="MCP/YpsA-like"/>
    <property type="match status" value="1"/>
</dbReference>
<name>PPNN_ECO57</name>
<evidence type="ECO:0000250" key="1">
    <source>
        <dbReference type="UniProtKB" id="P0ADR8"/>
    </source>
</evidence>
<evidence type="ECO:0000305" key="2"/>
<accession>P0ADS0</accession>
<accession>P37350</accession>
<accession>Q46921</accession>
<protein>
    <recommendedName>
        <fullName evidence="1">Pyrimidine/purine nucleotide 5'-monophosphate nucleosidase</fullName>
        <ecNumber evidence="1">3.2.2.-</ecNumber>
        <ecNumber evidence="1">3.2.2.10</ecNumber>
    </recommendedName>
    <alternativeName>
        <fullName evidence="1">AMP nucleosidase</fullName>
        <ecNumber evidence="1">3.2.2.4</ecNumber>
    </alternativeName>
    <alternativeName>
        <fullName evidence="1">CMP nucleosidase</fullName>
    </alternativeName>
    <alternativeName>
        <fullName evidence="1">GMP nucleosidase</fullName>
    </alternativeName>
    <alternativeName>
        <fullName evidence="1">IMP nucleosidase</fullName>
    </alternativeName>
    <alternativeName>
        <fullName evidence="1">UMP nucleosidase</fullName>
    </alternativeName>
    <alternativeName>
        <fullName evidence="1">dTMP nucleosidase</fullName>
    </alternativeName>
</protein>
<proteinExistence type="inferred from homology"/>
<reference key="1">
    <citation type="journal article" date="2001" name="Nature">
        <title>Genome sequence of enterohaemorrhagic Escherichia coli O157:H7.</title>
        <authorList>
            <person name="Perna N.T."/>
            <person name="Plunkett G. III"/>
            <person name="Burland V."/>
            <person name="Mau B."/>
            <person name="Glasner J.D."/>
            <person name="Rose D.J."/>
            <person name="Mayhew G.F."/>
            <person name="Evans P.S."/>
            <person name="Gregor J."/>
            <person name="Kirkpatrick H.A."/>
            <person name="Posfai G."/>
            <person name="Hackett J."/>
            <person name="Klink S."/>
            <person name="Boutin A."/>
            <person name="Shao Y."/>
            <person name="Miller L."/>
            <person name="Grotbeck E.J."/>
            <person name="Davis N.W."/>
            <person name="Lim A."/>
            <person name="Dimalanta E.T."/>
            <person name="Potamousis K."/>
            <person name="Apodaca J."/>
            <person name="Anantharaman T.S."/>
            <person name="Lin J."/>
            <person name="Yen G."/>
            <person name="Schwartz D.C."/>
            <person name="Welch R.A."/>
            <person name="Blattner F.R."/>
        </authorList>
    </citation>
    <scope>NUCLEOTIDE SEQUENCE [LARGE SCALE GENOMIC DNA]</scope>
    <source>
        <strain>O157:H7 / EDL933 / ATCC 700927 / EHEC</strain>
    </source>
</reference>
<reference key="2">
    <citation type="journal article" date="2001" name="DNA Res.">
        <title>Complete genome sequence of enterohemorrhagic Escherichia coli O157:H7 and genomic comparison with a laboratory strain K-12.</title>
        <authorList>
            <person name="Hayashi T."/>
            <person name="Makino K."/>
            <person name="Ohnishi M."/>
            <person name="Kurokawa K."/>
            <person name="Ishii K."/>
            <person name="Yokoyama K."/>
            <person name="Han C.-G."/>
            <person name="Ohtsubo E."/>
            <person name="Nakayama K."/>
            <person name="Murata T."/>
            <person name="Tanaka M."/>
            <person name="Tobe T."/>
            <person name="Iida T."/>
            <person name="Takami H."/>
            <person name="Honda T."/>
            <person name="Sasakawa C."/>
            <person name="Ogasawara N."/>
            <person name="Yasunaga T."/>
            <person name="Kuhara S."/>
            <person name="Shiba T."/>
            <person name="Hattori M."/>
            <person name="Shinagawa H."/>
        </authorList>
    </citation>
    <scope>NUCLEOTIDE SEQUENCE [LARGE SCALE GENOMIC DNA]</scope>
    <source>
        <strain>O157:H7 / Sakai / RIMD 0509952 / EHEC</strain>
    </source>
</reference>
<sequence>MITHISPLGSMDMLSQLEVDMLKRTASSDLYQLFRNCSLAVLNSGSLTDNSKELLSRFENFDINVLRRERGVKLELINPPEEAFVDGRIIRALQANLFAVLRDILFVYGQIHNTVRFPNLNLDNSVHITNLVFSILRNARALHVGEAPNMVVCWGGHSINENEYLYARRVGNQLGLRELNICTGCGPGAMEAPMKGAAVGHAQQRYKDSRFIGMTEPSIIAAEPPNPLVNELIIMPDIEKRLEAFVRIAHGIIIFPGGVGTAEELLYLLGILMNPANKDQVLPLILTGPKESADYFRVLDEFVVHTLGENARRHYRIIIDDAAEVARQMKKSMPLVKENRRDTGDAYSFNWSMRIAPDLQMPFEPSHENMANLKLYPDQPVEVLAADLRRAFSGIVAGNVKEVGIRAIEEFGPYKINGDKEIMRRMDDLLQGFVAQHRMKLPGSAYIPCYEICT</sequence>
<comment type="function">
    <text evidence="1">Catalyzes the hydrolysis of the N-glycosidic bond of diverse pyrimidine and purine nucleotide 5'-monophosphates, to form ribose 5-phosphate and the corresponding free base. Can use AMP, GMP, IMP, CMP, dTMP and UMP as substrates. Cannot catalyze the reverse reactions. May contribute to nucleoside pool homeostasis by degrading excess nucleotides and feeding back the ribose moiety to catabolism.</text>
</comment>
<comment type="catalytic activity">
    <reaction evidence="1">
        <text>a pyrimidine ribonucleoside 5'-phosphate + H2O = a pyrimidine nucleobase + D-ribose 5-phosphate</text>
        <dbReference type="Rhea" id="RHEA:13425"/>
        <dbReference type="ChEBI" id="CHEBI:15377"/>
        <dbReference type="ChEBI" id="CHEBI:26432"/>
        <dbReference type="ChEBI" id="CHEBI:78346"/>
        <dbReference type="ChEBI" id="CHEBI:138238"/>
        <dbReference type="EC" id="3.2.2.10"/>
    </reaction>
</comment>
<comment type="catalytic activity">
    <reaction evidence="1">
        <text>AMP + H2O = adenine + D-ribose 5-phosphate</text>
        <dbReference type="Rhea" id="RHEA:20129"/>
        <dbReference type="ChEBI" id="CHEBI:15377"/>
        <dbReference type="ChEBI" id="CHEBI:16708"/>
        <dbReference type="ChEBI" id="CHEBI:78346"/>
        <dbReference type="ChEBI" id="CHEBI:456215"/>
        <dbReference type="EC" id="3.2.2.4"/>
    </reaction>
</comment>
<comment type="catalytic activity">
    <reaction evidence="1">
        <text>GMP + H2O = guanine + D-ribose 5-phosphate</text>
        <dbReference type="Rhea" id="RHEA:52708"/>
        <dbReference type="ChEBI" id="CHEBI:15377"/>
        <dbReference type="ChEBI" id="CHEBI:16235"/>
        <dbReference type="ChEBI" id="CHEBI:58115"/>
        <dbReference type="ChEBI" id="CHEBI:78346"/>
    </reaction>
</comment>
<comment type="catalytic activity">
    <reaction evidence="1">
        <text>CMP + H2O = cytosine + D-ribose 5-phosphate</text>
        <dbReference type="Rhea" id="RHEA:30075"/>
        <dbReference type="ChEBI" id="CHEBI:15377"/>
        <dbReference type="ChEBI" id="CHEBI:16040"/>
        <dbReference type="ChEBI" id="CHEBI:60377"/>
        <dbReference type="ChEBI" id="CHEBI:78346"/>
        <dbReference type="EC" id="3.2.2.10"/>
    </reaction>
</comment>
<comment type="catalytic activity">
    <reaction evidence="1">
        <text>IMP + H2O = hypoxanthine + D-ribose 5-phosphate</text>
        <dbReference type="Rhea" id="RHEA:20469"/>
        <dbReference type="ChEBI" id="CHEBI:15377"/>
        <dbReference type="ChEBI" id="CHEBI:17368"/>
        <dbReference type="ChEBI" id="CHEBI:58053"/>
        <dbReference type="ChEBI" id="CHEBI:78346"/>
    </reaction>
</comment>
<comment type="catalytic activity">
    <reaction evidence="1">
        <text>UMP + H2O = D-ribose 5-phosphate + uracil</text>
        <dbReference type="Rhea" id="RHEA:52704"/>
        <dbReference type="ChEBI" id="CHEBI:15377"/>
        <dbReference type="ChEBI" id="CHEBI:17568"/>
        <dbReference type="ChEBI" id="CHEBI:57865"/>
        <dbReference type="ChEBI" id="CHEBI:78346"/>
    </reaction>
</comment>
<comment type="catalytic activity">
    <reaction evidence="1">
        <text>dTMP + H2O = 2-deoxy-D-ribose 5-phosphate + thymine</text>
        <dbReference type="Rhea" id="RHEA:52712"/>
        <dbReference type="ChEBI" id="CHEBI:15377"/>
        <dbReference type="ChEBI" id="CHEBI:17821"/>
        <dbReference type="ChEBI" id="CHEBI:62877"/>
        <dbReference type="ChEBI" id="CHEBI:63528"/>
    </reaction>
</comment>
<comment type="similarity">
    <text evidence="2">Belongs to the LOG family.</text>
</comment>
<gene>
    <name evidence="1" type="primary">ppnN</name>
    <name type="synonym">ygdH</name>
    <name type="ordered locus">Z4112</name>
    <name type="ordered locus">ECs3655</name>
</gene>
<organism>
    <name type="scientific">Escherichia coli O157:H7</name>
    <dbReference type="NCBI Taxonomy" id="83334"/>
    <lineage>
        <taxon>Bacteria</taxon>
        <taxon>Pseudomonadati</taxon>
        <taxon>Pseudomonadota</taxon>
        <taxon>Gammaproteobacteria</taxon>
        <taxon>Enterobacterales</taxon>
        <taxon>Enterobacteriaceae</taxon>
        <taxon>Escherichia</taxon>
    </lineage>
</organism>
<feature type="chain" id="PRO_0000169335" description="Pyrimidine/purine nucleotide 5'-monophosphate nucleosidase">
    <location>
        <begin position="1"/>
        <end position="454"/>
    </location>
</feature>